<sequence length="407" mass="45472">MIGFEIFLAIGMFTAIVLGLVAIILVARAKLVSSGDVTIQINGEHSLTVPAGGKLLQTLAANNVFLSSACGGGGTCAQCKCVVVDGGGEMLPTEESHFTRRQAKEGWRLSCQTPVKQDMQIRVPEEVFGVKKWECTVESNPNVATFIKELTLRLPDGESVDFRAGGYVQLECPPHVVEYKDFDIQPEYRGDWDKFNMWRYVSKVDETVIRAYSMANYPEEKGVVKFNIRIASPPPGSDLPPGQMSSWVFNLKPGDKVTVYGPFGEFFAKDTEAEMVFIGGGAGMAPMRSHIFDQLRRLRSTRKISFWYGARSLREAFYTEEYDQLQAENPNFQWHLALSDPQPEDNWTGLTGFIHNVLFENYLKDHPAPEDCEFYMCGPPMMNAAVIKMLTDLGVERENILLDDFGG</sequence>
<organism>
    <name type="scientific">Pseudomonas paraeruginosa (strain DSM 24068 / PA7)</name>
    <name type="common">Pseudomonas aeruginosa (strain PA7)</name>
    <dbReference type="NCBI Taxonomy" id="381754"/>
    <lineage>
        <taxon>Bacteria</taxon>
        <taxon>Pseudomonadati</taxon>
        <taxon>Pseudomonadota</taxon>
        <taxon>Gammaproteobacteria</taxon>
        <taxon>Pseudomonadales</taxon>
        <taxon>Pseudomonadaceae</taxon>
        <taxon>Pseudomonas</taxon>
        <taxon>Pseudomonas paraeruginosa</taxon>
    </lineage>
</organism>
<comment type="function">
    <text evidence="1">NQR complex catalyzes the reduction of ubiquinone-1 to ubiquinol by two successive reactions, coupled with the transport of Na(+) ions from the cytoplasm to the periplasm. The first step is catalyzed by NqrF, which accepts electrons from NADH and reduces ubiquinone-1 to ubisemiquinone by a one-electron transfer pathway.</text>
</comment>
<comment type="catalytic activity">
    <reaction evidence="1">
        <text>a ubiquinone + n Na(+)(in) + NADH + H(+) = a ubiquinol + n Na(+)(out) + NAD(+)</text>
        <dbReference type="Rhea" id="RHEA:47748"/>
        <dbReference type="Rhea" id="RHEA-COMP:9565"/>
        <dbReference type="Rhea" id="RHEA-COMP:9566"/>
        <dbReference type="ChEBI" id="CHEBI:15378"/>
        <dbReference type="ChEBI" id="CHEBI:16389"/>
        <dbReference type="ChEBI" id="CHEBI:17976"/>
        <dbReference type="ChEBI" id="CHEBI:29101"/>
        <dbReference type="ChEBI" id="CHEBI:57540"/>
        <dbReference type="ChEBI" id="CHEBI:57945"/>
        <dbReference type="EC" id="7.2.1.1"/>
    </reaction>
</comment>
<comment type="cofactor">
    <cofactor evidence="1">
        <name>[2Fe-2S] cluster</name>
        <dbReference type="ChEBI" id="CHEBI:190135"/>
    </cofactor>
    <text evidence="1">Binds 1 [2Fe-2S] cluster.</text>
</comment>
<comment type="cofactor">
    <cofactor evidence="1">
        <name>FAD</name>
        <dbReference type="ChEBI" id="CHEBI:57692"/>
    </cofactor>
</comment>
<comment type="subunit">
    <text evidence="1">Composed of six subunits; NqrA, NqrB, NqrC, NqrD, NqrE and NqrF.</text>
</comment>
<comment type="subcellular location">
    <subcellularLocation>
        <location evidence="1">Cell inner membrane</location>
        <topology evidence="1">Single-pass membrane protein</topology>
    </subcellularLocation>
</comment>
<comment type="similarity">
    <text evidence="1">Belongs to the NqrF family.</text>
</comment>
<dbReference type="EC" id="7.2.1.1" evidence="1"/>
<dbReference type="EMBL" id="CP000744">
    <property type="protein sequence ID" value="ABR85080.1"/>
    <property type="molecule type" value="Genomic_DNA"/>
</dbReference>
<dbReference type="RefSeq" id="WP_003156861.1">
    <property type="nucleotide sequence ID" value="NC_009656.1"/>
</dbReference>
<dbReference type="SMR" id="A6V3A2"/>
<dbReference type="GeneID" id="77220514"/>
<dbReference type="KEGG" id="pap:PSPA7_2165"/>
<dbReference type="HOGENOM" id="CLU_003827_7_2_6"/>
<dbReference type="Proteomes" id="UP000001582">
    <property type="component" value="Chromosome"/>
</dbReference>
<dbReference type="GO" id="GO:0005886">
    <property type="term" value="C:plasma membrane"/>
    <property type="evidence" value="ECO:0007669"/>
    <property type="project" value="UniProtKB-SubCell"/>
</dbReference>
<dbReference type="GO" id="GO:0051537">
    <property type="term" value="F:2 iron, 2 sulfur cluster binding"/>
    <property type="evidence" value="ECO:0007669"/>
    <property type="project" value="UniProtKB-KW"/>
</dbReference>
<dbReference type="GO" id="GO:0009055">
    <property type="term" value="F:electron transfer activity"/>
    <property type="evidence" value="ECO:0007669"/>
    <property type="project" value="UniProtKB-UniRule"/>
</dbReference>
<dbReference type="GO" id="GO:0046872">
    <property type="term" value="F:metal ion binding"/>
    <property type="evidence" value="ECO:0007669"/>
    <property type="project" value="UniProtKB-KW"/>
</dbReference>
<dbReference type="GO" id="GO:0016655">
    <property type="term" value="F:oxidoreductase activity, acting on NAD(P)H, quinone or similar compound as acceptor"/>
    <property type="evidence" value="ECO:0007669"/>
    <property type="project" value="InterPro"/>
</dbReference>
<dbReference type="GO" id="GO:0006814">
    <property type="term" value="P:sodium ion transport"/>
    <property type="evidence" value="ECO:0007669"/>
    <property type="project" value="UniProtKB-UniRule"/>
</dbReference>
<dbReference type="CDD" id="cd00207">
    <property type="entry name" value="fer2"/>
    <property type="match status" value="1"/>
</dbReference>
<dbReference type="CDD" id="cd06188">
    <property type="entry name" value="NADH_quinone_reductase"/>
    <property type="match status" value="1"/>
</dbReference>
<dbReference type="FunFam" id="3.40.50.80:FF:000014">
    <property type="entry name" value="Na(+)-translocating NADH-quinone reductase subunit F"/>
    <property type="match status" value="1"/>
</dbReference>
<dbReference type="Gene3D" id="3.10.20.30">
    <property type="match status" value="1"/>
</dbReference>
<dbReference type="Gene3D" id="3.40.50.80">
    <property type="entry name" value="Nucleotide-binding domain of ferredoxin-NADP reductase (FNR) module"/>
    <property type="match status" value="1"/>
</dbReference>
<dbReference type="Gene3D" id="2.40.30.10">
    <property type="entry name" value="Translation factors"/>
    <property type="match status" value="1"/>
</dbReference>
<dbReference type="HAMAP" id="MF_00430">
    <property type="entry name" value="NqrF"/>
    <property type="match status" value="1"/>
</dbReference>
<dbReference type="InterPro" id="IPR036010">
    <property type="entry name" value="2Fe-2S_ferredoxin-like_sf"/>
</dbReference>
<dbReference type="InterPro" id="IPR001041">
    <property type="entry name" value="2Fe-2S_ferredoxin-type"/>
</dbReference>
<dbReference type="InterPro" id="IPR012675">
    <property type="entry name" value="Beta-grasp_dom_sf"/>
</dbReference>
<dbReference type="InterPro" id="IPR008333">
    <property type="entry name" value="Cbr1-like_FAD-bd_dom"/>
</dbReference>
<dbReference type="InterPro" id="IPR017927">
    <property type="entry name" value="FAD-bd_FR_type"/>
</dbReference>
<dbReference type="InterPro" id="IPR039261">
    <property type="entry name" value="FNR_nucleotide-bd"/>
</dbReference>
<dbReference type="InterPro" id="IPR010205">
    <property type="entry name" value="NqrF"/>
</dbReference>
<dbReference type="InterPro" id="IPR001433">
    <property type="entry name" value="OxRdtase_FAD/NAD-bd"/>
</dbReference>
<dbReference type="InterPro" id="IPR017938">
    <property type="entry name" value="Riboflavin_synthase-like_b-brl"/>
</dbReference>
<dbReference type="NCBIfam" id="TIGR01941">
    <property type="entry name" value="nqrF"/>
    <property type="match status" value="1"/>
</dbReference>
<dbReference type="PANTHER" id="PTHR43644">
    <property type="entry name" value="NA(+)-TRANSLOCATING NADH-QUINONE REDUCTASE SUBUNIT"/>
    <property type="match status" value="1"/>
</dbReference>
<dbReference type="PANTHER" id="PTHR43644:SF1">
    <property type="entry name" value="NAD(P)H-FLAVIN REDUCTASE"/>
    <property type="match status" value="1"/>
</dbReference>
<dbReference type="Pfam" id="PF00970">
    <property type="entry name" value="FAD_binding_6"/>
    <property type="match status" value="1"/>
</dbReference>
<dbReference type="Pfam" id="PF00111">
    <property type="entry name" value="Fer2"/>
    <property type="match status" value="1"/>
</dbReference>
<dbReference type="Pfam" id="PF00175">
    <property type="entry name" value="NAD_binding_1"/>
    <property type="match status" value="1"/>
</dbReference>
<dbReference type="PIRSF" id="PIRSF000044">
    <property type="entry name" value="Cis_Diol_DH_RD"/>
    <property type="match status" value="1"/>
</dbReference>
<dbReference type="SUPFAM" id="SSF54292">
    <property type="entry name" value="2Fe-2S ferredoxin-like"/>
    <property type="match status" value="1"/>
</dbReference>
<dbReference type="SUPFAM" id="SSF52343">
    <property type="entry name" value="Ferredoxin reductase-like, C-terminal NADP-linked domain"/>
    <property type="match status" value="1"/>
</dbReference>
<dbReference type="SUPFAM" id="SSF63380">
    <property type="entry name" value="Riboflavin synthase domain-like"/>
    <property type="match status" value="1"/>
</dbReference>
<dbReference type="PROSITE" id="PS51085">
    <property type="entry name" value="2FE2S_FER_2"/>
    <property type="match status" value="1"/>
</dbReference>
<dbReference type="PROSITE" id="PS51384">
    <property type="entry name" value="FAD_FR"/>
    <property type="match status" value="1"/>
</dbReference>
<accession>A6V3A2</accession>
<reference key="1">
    <citation type="submission" date="2007-06" db="EMBL/GenBank/DDBJ databases">
        <authorList>
            <person name="Dodson R.J."/>
            <person name="Harkins D."/>
            <person name="Paulsen I.T."/>
        </authorList>
    </citation>
    <scope>NUCLEOTIDE SEQUENCE [LARGE SCALE GENOMIC DNA]</scope>
    <source>
        <strain>DSM 24068 / PA7</strain>
    </source>
</reference>
<feature type="chain" id="PRO_1000080589" description="Na(+)-translocating NADH-quinone reductase subunit F">
    <location>
        <begin position="1"/>
        <end position="407"/>
    </location>
</feature>
<feature type="transmembrane region" description="Helical" evidence="1">
    <location>
        <begin position="6"/>
        <end position="26"/>
    </location>
</feature>
<feature type="domain" description="2Fe-2S ferredoxin-type" evidence="1">
    <location>
        <begin position="35"/>
        <end position="127"/>
    </location>
</feature>
<feature type="domain" description="FAD-binding FR-type" evidence="1">
    <location>
        <begin position="130"/>
        <end position="269"/>
    </location>
</feature>
<feature type="binding site" evidence="1">
    <location>
        <position position="70"/>
    </location>
    <ligand>
        <name>[2Fe-2S] cluster</name>
        <dbReference type="ChEBI" id="CHEBI:190135"/>
    </ligand>
</feature>
<feature type="binding site" evidence="1">
    <location>
        <position position="76"/>
    </location>
    <ligand>
        <name>[2Fe-2S] cluster</name>
        <dbReference type="ChEBI" id="CHEBI:190135"/>
    </ligand>
</feature>
<feature type="binding site" evidence="1">
    <location>
        <position position="79"/>
    </location>
    <ligand>
        <name>[2Fe-2S] cluster</name>
        <dbReference type="ChEBI" id="CHEBI:190135"/>
    </ligand>
</feature>
<feature type="binding site" evidence="1">
    <location>
        <position position="111"/>
    </location>
    <ligand>
        <name>[2Fe-2S] cluster</name>
        <dbReference type="ChEBI" id="CHEBI:190135"/>
    </ligand>
</feature>
<gene>
    <name evidence="1" type="primary">nqrF</name>
    <name type="ordered locus">PSPA7_2165</name>
</gene>
<keyword id="KW-0001">2Fe-2S</keyword>
<keyword id="KW-0997">Cell inner membrane</keyword>
<keyword id="KW-1003">Cell membrane</keyword>
<keyword id="KW-0274">FAD</keyword>
<keyword id="KW-0285">Flavoprotein</keyword>
<keyword id="KW-0406">Ion transport</keyword>
<keyword id="KW-0408">Iron</keyword>
<keyword id="KW-0411">Iron-sulfur</keyword>
<keyword id="KW-0472">Membrane</keyword>
<keyword id="KW-0479">Metal-binding</keyword>
<keyword id="KW-0520">NAD</keyword>
<keyword id="KW-0915">Sodium</keyword>
<keyword id="KW-0739">Sodium transport</keyword>
<keyword id="KW-1278">Translocase</keyword>
<keyword id="KW-0812">Transmembrane</keyword>
<keyword id="KW-1133">Transmembrane helix</keyword>
<keyword id="KW-0813">Transport</keyword>
<keyword id="KW-0830">Ubiquinone</keyword>
<proteinExistence type="inferred from homology"/>
<evidence type="ECO:0000255" key="1">
    <source>
        <dbReference type="HAMAP-Rule" id="MF_00430"/>
    </source>
</evidence>
<protein>
    <recommendedName>
        <fullName evidence="1">Na(+)-translocating NADH-quinone reductase subunit F</fullName>
        <shortName evidence="1">Na(+)-NQR subunit F</shortName>
        <shortName evidence="1">Na(+)-translocating NQR subunit F</shortName>
        <ecNumber evidence="1">7.2.1.1</ecNumber>
    </recommendedName>
    <alternativeName>
        <fullName evidence="1">NQR complex subunit F</fullName>
    </alternativeName>
    <alternativeName>
        <fullName evidence="1">NQR-1 subunit F</fullName>
    </alternativeName>
</protein>
<name>NQRF_PSEP7</name>